<dbReference type="EMBL" id="AE016817">
    <property type="protein sequence ID" value="AAS51980.1"/>
    <property type="molecule type" value="Genomic_DNA"/>
</dbReference>
<dbReference type="RefSeq" id="NP_984156.1">
    <property type="nucleotide sequence ID" value="NM_209509.1"/>
</dbReference>
<dbReference type="STRING" id="284811.Q75A59"/>
<dbReference type="EnsemblFungi" id="AAS51980">
    <property type="protein sequence ID" value="AAS51980"/>
    <property type="gene ID" value="AGOS_ADR060C"/>
</dbReference>
<dbReference type="GeneID" id="4620305"/>
<dbReference type="KEGG" id="ago:AGOS_ADR060C"/>
<dbReference type="eggNOG" id="ENOG502SA4A">
    <property type="taxonomic scope" value="Eukaryota"/>
</dbReference>
<dbReference type="HOGENOM" id="CLU_1137773_0_0_1"/>
<dbReference type="InParanoid" id="Q75A59"/>
<dbReference type="OMA" id="RIDEHES"/>
<dbReference type="OrthoDB" id="4070541at2759"/>
<dbReference type="Proteomes" id="UP000000591">
    <property type="component" value="Chromosome IV"/>
</dbReference>
<dbReference type="GO" id="GO:0005634">
    <property type="term" value="C:nucleus"/>
    <property type="evidence" value="ECO:0007669"/>
    <property type="project" value="UniProtKB-SubCell"/>
</dbReference>
<dbReference type="GO" id="GO:0006325">
    <property type="term" value="P:chromatin organization"/>
    <property type="evidence" value="ECO:0007669"/>
    <property type="project" value="UniProtKB-KW"/>
</dbReference>
<dbReference type="CDD" id="cd22897">
    <property type="entry name" value="Lge1"/>
    <property type="match status" value="1"/>
</dbReference>
<dbReference type="InterPro" id="IPR021581">
    <property type="entry name" value="Tscrpt_reg_Lge1"/>
</dbReference>
<dbReference type="Pfam" id="PF11488">
    <property type="entry name" value="Lge1"/>
    <property type="match status" value="1"/>
</dbReference>
<accession>Q75A59</accession>
<proteinExistence type="inferred from homology"/>
<name>LGE1_EREGS</name>
<reference key="1">
    <citation type="journal article" date="2004" name="Science">
        <title>The Ashbya gossypii genome as a tool for mapping the ancient Saccharomyces cerevisiae genome.</title>
        <authorList>
            <person name="Dietrich F.S."/>
            <person name="Voegeli S."/>
            <person name="Brachat S."/>
            <person name="Lerch A."/>
            <person name="Gates K."/>
            <person name="Steiner S."/>
            <person name="Mohr C."/>
            <person name="Poehlmann R."/>
            <person name="Luedi P."/>
            <person name="Choi S."/>
            <person name="Wing R.A."/>
            <person name="Flavier A."/>
            <person name="Gaffney T.D."/>
            <person name="Philippsen P."/>
        </authorList>
    </citation>
    <scope>NUCLEOTIDE SEQUENCE [LARGE SCALE GENOMIC DNA]</scope>
    <source>
        <strain>ATCC 10895 / CBS 109.51 / FGSC 9923 / NRRL Y-1056</strain>
    </source>
</reference>
<reference key="2">
    <citation type="journal article" date="2013" name="G3 (Bethesda)">
        <title>Genomes of Ashbya fungi isolated from insects reveal four mating-type loci, numerous translocations, lack of transposons, and distinct gene duplications.</title>
        <authorList>
            <person name="Dietrich F.S."/>
            <person name="Voegeli S."/>
            <person name="Kuo S."/>
            <person name="Philippsen P."/>
        </authorList>
    </citation>
    <scope>GENOME REANNOTATION</scope>
    <source>
        <strain>ATCC 10895 / CBS 109.51 / FGSC 9923 / NRRL Y-1056</strain>
    </source>
</reference>
<evidence type="ECO:0000250" key="1"/>
<evidence type="ECO:0000256" key="2">
    <source>
        <dbReference type="SAM" id="MobiDB-lite"/>
    </source>
</evidence>
<feature type="chain" id="PRO_0000076231" description="Transcriptional regulatory protein LGE1">
    <location>
        <begin position="1"/>
        <end position="244"/>
    </location>
</feature>
<feature type="region of interest" description="Disordered" evidence="2">
    <location>
        <begin position="1"/>
        <end position="81"/>
    </location>
</feature>
<feature type="region of interest" description="Disordered" evidence="2">
    <location>
        <begin position="132"/>
        <end position="164"/>
    </location>
</feature>
<feature type="compositionally biased region" description="Pro residues" evidence="2">
    <location>
        <begin position="15"/>
        <end position="27"/>
    </location>
</feature>
<feature type="compositionally biased region" description="Low complexity" evidence="2">
    <location>
        <begin position="28"/>
        <end position="44"/>
    </location>
</feature>
<comment type="function">
    <text evidence="1">Involved in transcriptional activation. Also required for ubiquitination of histone H2B to form H2BK123ub1. H2BK123ub1 gives a specific tag for epigenetic transcriptional activation, telomeric silencing, and is also a prerequisite for H3K4me and H3K79me formation. Its precise role in H2BK123ub1 formation however is unclear (By similarity).</text>
</comment>
<comment type="subcellular location">
    <subcellularLocation>
        <location evidence="1">Nucleus</location>
    </subcellularLocation>
</comment>
<keyword id="KW-0010">Activator</keyword>
<keyword id="KW-0156">Chromatin regulator</keyword>
<keyword id="KW-0175">Coiled coil</keyword>
<keyword id="KW-0539">Nucleus</keyword>
<keyword id="KW-1185">Reference proteome</keyword>
<keyword id="KW-0804">Transcription</keyword>
<keyword id="KW-0805">Transcription regulation</keyword>
<sequence>MSFSGEHPGNANNEGPPPPPPPPPPPSHSSAPPSSQGGSARAAPLNGAFHSHQPHSQGYARAEGSNGYRQPYGRGGYRGSGGRYYGGYGYGHGGGGYGYGHGGGGNYGHGHHGYYGYQGEYRGHSGYQRFNSPAPVGTRYSGAAGPAARPPPPPEPEPEQPFELTDDPLFHLTELDRSTDDPRQLDEMRRIFKDSVQLDQKLEQQKLAMWRTELELSLLDTQSAKDALNVQLNQENLDALLMQG</sequence>
<organism>
    <name type="scientific">Eremothecium gossypii (strain ATCC 10895 / CBS 109.51 / FGSC 9923 / NRRL Y-1056)</name>
    <name type="common">Yeast</name>
    <name type="synonym">Ashbya gossypii</name>
    <dbReference type="NCBI Taxonomy" id="284811"/>
    <lineage>
        <taxon>Eukaryota</taxon>
        <taxon>Fungi</taxon>
        <taxon>Dikarya</taxon>
        <taxon>Ascomycota</taxon>
        <taxon>Saccharomycotina</taxon>
        <taxon>Saccharomycetes</taxon>
        <taxon>Saccharomycetales</taxon>
        <taxon>Saccharomycetaceae</taxon>
        <taxon>Eremothecium</taxon>
    </lineage>
</organism>
<gene>
    <name type="primary">LGE1</name>
    <name type="ordered locus">ADR060C</name>
</gene>
<protein>
    <recommendedName>
        <fullName>Transcriptional regulatory protein LGE1</fullName>
    </recommendedName>
</protein>